<evidence type="ECO:0000255" key="1">
    <source>
        <dbReference type="HAMAP-Rule" id="MF_00044"/>
    </source>
</evidence>
<accession>A7N949</accession>
<name>SYDND_FRATF</name>
<dbReference type="EC" id="6.1.1.23" evidence="1"/>
<dbReference type="EMBL" id="CP000803">
    <property type="protein sequence ID" value="ABU60502.1"/>
    <property type="molecule type" value="Genomic_DNA"/>
</dbReference>
<dbReference type="RefSeq" id="WP_010032850.1">
    <property type="nucleotide sequence ID" value="NC_009749.1"/>
</dbReference>
<dbReference type="SMR" id="A7N949"/>
<dbReference type="KEGG" id="fta:FTA_0024"/>
<dbReference type="HOGENOM" id="CLU_014330_3_2_6"/>
<dbReference type="GO" id="GO:0005737">
    <property type="term" value="C:cytoplasm"/>
    <property type="evidence" value="ECO:0007669"/>
    <property type="project" value="UniProtKB-SubCell"/>
</dbReference>
<dbReference type="GO" id="GO:0004815">
    <property type="term" value="F:aspartate-tRNA ligase activity"/>
    <property type="evidence" value="ECO:0007669"/>
    <property type="project" value="UniProtKB-UniRule"/>
</dbReference>
<dbReference type="GO" id="GO:0050560">
    <property type="term" value="F:aspartate-tRNA(Asn) ligase activity"/>
    <property type="evidence" value="ECO:0007669"/>
    <property type="project" value="UniProtKB-EC"/>
</dbReference>
<dbReference type="GO" id="GO:0005524">
    <property type="term" value="F:ATP binding"/>
    <property type="evidence" value="ECO:0007669"/>
    <property type="project" value="UniProtKB-UniRule"/>
</dbReference>
<dbReference type="GO" id="GO:0003676">
    <property type="term" value="F:nucleic acid binding"/>
    <property type="evidence" value="ECO:0007669"/>
    <property type="project" value="InterPro"/>
</dbReference>
<dbReference type="GO" id="GO:0006422">
    <property type="term" value="P:aspartyl-tRNA aminoacylation"/>
    <property type="evidence" value="ECO:0007669"/>
    <property type="project" value="UniProtKB-UniRule"/>
</dbReference>
<dbReference type="CDD" id="cd00777">
    <property type="entry name" value="AspRS_core"/>
    <property type="match status" value="1"/>
</dbReference>
<dbReference type="CDD" id="cd04317">
    <property type="entry name" value="EcAspRS_like_N"/>
    <property type="match status" value="1"/>
</dbReference>
<dbReference type="Gene3D" id="3.30.930.10">
    <property type="entry name" value="Bira Bifunctional Protein, Domain 2"/>
    <property type="match status" value="1"/>
</dbReference>
<dbReference type="Gene3D" id="3.30.1360.30">
    <property type="entry name" value="GAD-like domain"/>
    <property type="match status" value="1"/>
</dbReference>
<dbReference type="Gene3D" id="2.40.50.140">
    <property type="entry name" value="Nucleic acid-binding proteins"/>
    <property type="match status" value="1"/>
</dbReference>
<dbReference type="HAMAP" id="MF_00044">
    <property type="entry name" value="Asp_tRNA_synth_type1"/>
    <property type="match status" value="1"/>
</dbReference>
<dbReference type="InterPro" id="IPR004364">
    <property type="entry name" value="Aa-tRNA-synt_II"/>
</dbReference>
<dbReference type="InterPro" id="IPR006195">
    <property type="entry name" value="aa-tRNA-synth_II"/>
</dbReference>
<dbReference type="InterPro" id="IPR045864">
    <property type="entry name" value="aa-tRNA-synth_II/BPL/LPL"/>
</dbReference>
<dbReference type="InterPro" id="IPR004524">
    <property type="entry name" value="Asp-tRNA-ligase_1"/>
</dbReference>
<dbReference type="InterPro" id="IPR047089">
    <property type="entry name" value="Asp-tRNA-ligase_1_N"/>
</dbReference>
<dbReference type="InterPro" id="IPR002312">
    <property type="entry name" value="Asp/Asn-tRNA-synth_IIb"/>
</dbReference>
<dbReference type="InterPro" id="IPR047090">
    <property type="entry name" value="AspRS_core"/>
</dbReference>
<dbReference type="InterPro" id="IPR004115">
    <property type="entry name" value="GAD-like_sf"/>
</dbReference>
<dbReference type="InterPro" id="IPR029351">
    <property type="entry name" value="GAD_dom"/>
</dbReference>
<dbReference type="InterPro" id="IPR012340">
    <property type="entry name" value="NA-bd_OB-fold"/>
</dbReference>
<dbReference type="InterPro" id="IPR004365">
    <property type="entry name" value="NA-bd_OB_tRNA"/>
</dbReference>
<dbReference type="NCBIfam" id="TIGR00459">
    <property type="entry name" value="aspS_bact"/>
    <property type="match status" value="1"/>
</dbReference>
<dbReference type="NCBIfam" id="NF001750">
    <property type="entry name" value="PRK00476.1"/>
    <property type="match status" value="1"/>
</dbReference>
<dbReference type="PANTHER" id="PTHR22594:SF5">
    <property type="entry name" value="ASPARTATE--TRNA LIGASE, MITOCHONDRIAL"/>
    <property type="match status" value="1"/>
</dbReference>
<dbReference type="PANTHER" id="PTHR22594">
    <property type="entry name" value="ASPARTYL/LYSYL-TRNA SYNTHETASE"/>
    <property type="match status" value="1"/>
</dbReference>
<dbReference type="Pfam" id="PF02938">
    <property type="entry name" value="GAD"/>
    <property type="match status" value="1"/>
</dbReference>
<dbReference type="Pfam" id="PF00152">
    <property type="entry name" value="tRNA-synt_2"/>
    <property type="match status" value="1"/>
</dbReference>
<dbReference type="Pfam" id="PF01336">
    <property type="entry name" value="tRNA_anti-codon"/>
    <property type="match status" value="1"/>
</dbReference>
<dbReference type="PRINTS" id="PR01042">
    <property type="entry name" value="TRNASYNTHASP"/>
</dbReference>
<dbReference type="SUPFAM" id="SSF55681">
    <property type="entry name" value="Class II aaRS and biotin synthetases"/>
    <property type="match status" value="1"/>
</dbReference>
<dbReference type="SUPFAM" id="SSF55261">
    <property type="entry name" value="GAD domain-like"/>
    <property type="match status" value="1"/>
</dbReference>
<dbReference type="SUPFAM" id="SSF50249">
    <property type="entry name" value="Nucleic acid-binding proteins"/>
    <property type="match status" value="1"/>
</dbReference>
<dbReference type="PROSITE" id="PS50862">
    <property type="entry name" value="AA_TRNA_LIGASE_II"/>
    <property type="match status" value="1"/>
</dbReference>
<organism>
    <name type="scientific">Francisella tularensis subsp. holarctica (strain FTNF002-00 / FTA)</name>
    <dbReference type="NCBI Taxonomy" id="458234"/>
    <lineage>
        <taxon>Bacteria</taxon>
        <taxon>Pseudomonadati</taxon>
        <taxon>Pseudomonadota</taxon>
        <taxon>Gammaproteobacteria</taxon>
        <taxon>Thiotrichales</taxon>
        <taxon>Francisellaceae</taxon>
        <taxon>Francisella</taxon>
    </lineage>
</organism>
<gene>
    <name evidence="1" type="primary">aspS</name>
    <name type="ordered locus">FTA_0024</name>
</gene>
<feature type="chain" id="PRO_1000006677" description="Aspartate--tRNA(Asp/Asn) ligase">
    <location>
        <begin position="1"/>
        <end position="590"/>
    </location>
</feature>
<feature type="region of interest" description="Aspartate" evidence="1">
    <location>
        <begin position="196"/>
        <end position="199"/>
    </location>
</feature>
<feature type="binding site" evidence="1">
    <location>
        <position position="172"/>
    </location>
    <ligand>
        <name>L-aspartate</name>
        <dbReference type="ChEBI" id="CHEBI:29991"/>
    </ligand>
</feature>
<feature type="binding site" evidence="1">
    <location>
        <begin position="218"/>
        <end position="220"/>
    </location>
    <ligand>
        <name>ATP</name>
        <dbReference type="ChEBI" id="CHEBI:30616"/>
    </ligand>
</feature>
<feature type="binding site" evidence="1">
    <location>
        <position position="218"/>
    </location>
    <ligand>
        <name>L-aspartate</name>
        <dbReference type="ChEBI" id="CHEBI:29991"/>
    </ligand>
</feature>
<feature type="binding site" evidence="1">
    <location>
        <position position="227"/>
    </location>
    <ligand>
        <name>ATP</name>
        <dbReference type="ChEBI" id="CHEBI:30616"/>
    </ligand>
</feature>
<feature type="binding site" evidence="1">
    <location>
        <position position="449"/>
    </location>
    <ligand>
        <name>L-aspartate</name>
        <dbReference type="ChEBI" id="CHEBI:29991"/>
    </ligand>
</feature>
<feature type="binding site" evidence="1">
    <location>
        <position position="484"/>
    </location>
    <ligand>
        <name>ATP</name>
        <dbReference type="ChEBI" id="CHEBI:30616"/>
    </ligand>
</feature>
<feature type="binding site" evidence="1">
    <location>
        <position position="491"/>
    </location>
    <ligand>
        <name>L-aspartate</name>
        <dbReference type="ChEBI" id="CHEBI:29991"/>
    </ligand>
</feature>
<feature type="binding site" evidence="1">
    <location>
        <begin position="536"/>
        <end position="539"/>
    </location>
    <ligand>
        <name>ATP</name>
        <dbReference type="ChEBI" id="CHEBI:30616"/>
    </ligand>
</feature>
<feature type="site" description="Important for tRNA non-discrimination" evidence="1">
    <location>
        <position position="30"/>
    </location>
</feature>
<feature type="site" description="Important for tRNA non-discrimination" evidence="1">
    <location>
        <position position="80"/>
    </location>
</feature>
<protein>
    <recommendedName>
        <fullName evidence="1">Aspartate--tRNA(Asp/Asn) ligase</fullName>
        <ecNumber evidence="1">6.1.1.23</ecNumber>
    </recommendedName>
    <alternativeName>
        <fullName evidence="1">Aspartyl-tRNA synthetase</fullName>
        <shortName evidence="1">AspRS</shortName>
    </alternativeName>
    <alternativeName>
        <fullName evidence="1">Non-discriminating aspartyl-tRNA synthetase</fullName>
        <shortName evidence="1">ND-AspRS</shortName>
    </alternativeName>
</protein>
<keyword id="KW-0030">Aminoacyl-tRNA synthetase</keyword>
<keyword id="KW-0067">ATP-binding</keyword>
<keyword id="KW-0963">Cytoplasm</keyword>
<keyword id="KW-0436">Ligase</keyword>
<keyword id="KW-0547">Nucleotide-binding</keyword>
<keyword id="KW-0648">Protein biosynthesis</keyword>
<proteinExistence type="inferred from homology"/>
<reference key="1">
    <citation type="journal article" date="2009" name="PLoS ONE">
        <title>Complete genome sequence of Francisella tularensis subspecies holarctica FTNF002-00.</title>
        <authorList>
            <person name="Barabote R.D."/>
            <person name="Xie G."/>
            <person name="Brettin T.S."/>
            <person name="Hinrichs S.H."/>
            <person name="Fey P.D."/>
            <person name="Jay J.J."/>
            <person name="Engle J.L."/>
            <person name="Godbole S.D."/>
            <person name="Noronha J.M."/>
            <person name="Scheuermann R.H."/>
            <person name="Zhou L.W."/>
            <person name="Lion C."/>
            <person name="Dempsey M.P."/>
        </authorList>
    </citation>
    <scope>NUCLEOTIDE SEQUENCE [LARGE SCALE GENOMIC DNA]</scope>
    <source>
        <strain>FTNF002-00 / FTA</strain>
    </source>
</reference>
<comment type="function">
    <text evidence="1">Aspartyl-tRNA synthetase with relaxed tRNA specificity since it is able to aspartylate not only its cognate tRNA(Asp) but also tRNA(Asn). Reaction proceeds in two steps: L-aspartate is first activated by ATP to form Asp-AMP and then transferred to the acceptor end of tRNA(Asp/Asn).</text>
</comment>
<comment type="catalytic activity">
    <reaction evidence="1">
        <text>tRNA(Asx) + L-aspartate + ATP = L-aspartyl-tRNA(Asx) + AMP + diphosphate</text>
        <dbReference type="Rhea" id="RHEA:18349"/>
        <dbReference type="Rhea" id="RHEA-COMP:9710"/>
        <dbReference type="Rhea" id="RHEA-COMP:9711"/>
        <dbReference type="ChEBI" id="CHEBI:29991"/>
        <dbReference type="ChEBI" id="CHEBI:30616"/>
        <dbReference type="ChEBI" id="CHEBI:33019"/>
        <dbReference type="ChEBI" id="CHEBI:78442"/>
        <dbReference type="ChEBI" id="CHEBI:78516"/>
        <dbReference type="ChEBI" id="CHEBI:456215"/>
        <dbReference type="EC" id="6.1.1.23"/>
    </reaction>
</comment>
<comment type="subunit">
    <text evidence="1">Homodimer.</text>
</comment>
<comment type="subcellular location">
    <subcellularLocation>
        <location evidence="1">Cytoplasm</location>
    </subcellularLocation>
</comment>
<comment type="similarity">
    <text evidence="1">Belongs to the class-II aminoacyl-tRNA synthetase family. Type 1 subfamily.</text>
</comment>
<sequence>MRTHYSSDINEKLQGQKVTVCGWVHRRRDHGGVIFLDIRDRTGLVQLVFNPDNDNFKVADSLRSEFVIKAEGVVNLRPEGQENKNISSGKVEIIGDSIEVINKSKTIPFQLDDFQSTGEDVKLKYRYIDLRRPEMQHKLITRSKAIRYVRNFLDNNGFLDIETPFLTKATPEGARDYLVPSRNFNGKFYALPQSPQLFKQLLMVSGFDRYYQIVKCFRDEDLRADRQPEFTQIDIEASFIDEAFIMSTMERMIAGLFKETIGVEFATPFQVMTFADAIDKYGSDKPDLRIPLEFVNIKEDMQNEEFKVFSGPANDPQSRVIALRISGGNDKLTRKMIDEYTKFVGIYGAKGLAYIKINSLSQGKEGLQSPIVKNISEETLFKVIEKTSAKEDDLLFFGAGKTKIVNDSMGALRAKIGEDLDLFNKDWAPLWVVDFPMFEKDDNRLYAMHHPFTAPKVSSVEDLVNTNPEELSSRAYDMVINGYEVGGGSIRIHKQDIQAKVFNLLGISDDEAREKFGFMLDALSYGTPIHGGIAFGVDRLIMLLTGTTNIRDVIAFPKTQTASCLMTEAPSTVSLEQLNELGIAVKKEER</sequence>